<name>RPN3_ENCCU</name>
<protein>
    <recommendedName>
        <fullName>26S proteasome regulatory subunit RPN3</fullName>
    </recommendedName>
</protein>
<organism>
    <name type="scientific">Encephalitozoon cuniculi (strain GB-M1)</name>
    <name type="common">Microsporidian parasite</name>
    <dbReference type="NCBI Taxonomy" id="284813"/>
    <lineage>
        <taxon>Eukaryota</taxon>
        <taxon>Fungi</taxon>
        <taxon>Fungi incertae sedis</taxon>
        <taxon>Microsporidia</taxon>
        <taxon>Unikaryonidae</taxon>
        <taxon>Encephalitozoon</taxon>
    </lineage>
</organism>
<dbReference type="EMBL" id="AL590445">
    <property type="protein sequence ID" value="CAD26674.1"/>
    <property type="molecule type" value="Genomic_DNA"/>
</dbReference>
<dbReference type="RefSeq" id="NP_597497.1">
    <property type="nucleotide sequence ID" value="NM_001041363.1"/>
</dbReference>
<dbReference type="SMR" id="Q8SRT7"/>
<dbReference type="FunCoup" id="Q8SRT7">
    <property type="interactions" value="229"/>
</dbReference>
<dbReference type="STRING" id="284813.Q8SRT7"/>
<dbReference type="GeneID" id="859164"/>
<dbReference type="KEGG" id="ecu:ECU05_1540"/>
<dbReference type="VEuPathDB" id="MicrosporidiaDB:ECU05_1540"/>
<dbReference type="HOGENOM" id="CLU_062465_0_0_1"/>
<dbReference type="InParanoid" id="Q8SRT7"/>
<dbReference type="OMA" id="YDICISK"/>
<dbReference type="OrthoDB" id="1713558at2759"/>
<dbReference type="Proteomes" id="UP000000819">
    <property type="component" value="Chromosome V"/>
</dbReference>
<dbReference type="GO" id="GO:0008180">
    <property type="term" value="C:COP9 signalosome"/>
    <property type="evidence" value="ECO:0007669"/>
    <property type="project" value="TreeGrafter"/>
</dbReference>
<dbReference type="GO" id="GO:0005737">
    <property type="term" value="C:cytoplasm"/>
    <property type="evidence" value="ECO:0007669"/>
    <property type="project" value="UniProtKB-SubCell"/>
</dbReference>
<dbReference type="GO" id="GO:0000502">
    <property type="term" value="C:proteasome complex"/>
    <property type="evidence" value="ECO:0007669"/>
    <property type="project" value="UniProtKB-KW"/>
</dbReference>
<dbReference type="GO" id="GO:0006511">
    <property type="term" value="P:ubiquitin-dependent protein catabolic process"/>
    <property type="evidence" value="ECO:0007669"/>
    <property type="project" value="TreeGrafter"/>
</dbReference>
<dbReference type="Gene3D" id="1.25.40.570">
    <property type="match status" value="1"/>
</dbReference>
<dbReference type="InterPro" id="IPR050756">
    <property type="entry name" value="CSN3"/>
</dbReference>
<dbReference type="InterPro" id="IPR000717">
    <property type="entry name" value="PCI_dom"/>
</dbReference>
<dbReference type="InterPro" id="IPR036390">
    <property type="entry name" value="WH_DNA-bd_sf"/>
</dbReference>
<dbReference type="PANTHER" id="PTHR10758">
    <property type="entry name" value="26S PROTEASOME NON-ATPASE REGULATORY SUBUNIT 3/COP9 SIGNALOSOME COMPLEX SUBUNIT 3"/>
    <property type="match status" value="1"/>
</dbReference>
<dbReference type="PANTHER" id="PTHR10758:SF1">
    <property type="entry name" value="COP9 SIGNALOSOME COMPLEX SUBUNIT 3"/>
    <property type="match status" value="1"/>
</dbReference>
<dbReference type="Pfam" id="PF01399">
    <property type="entry name" value="PCI"/>
    <property type="match status" value="1"/>
</dbReference>
<dbReference type="SMART" id="SM00753">
    <property type="entry name" value="PAM"/>
    <property type="match status" value="1"/>
</dbReference>
<dbReference type="SUPFAM" id="SSF46785">
    <property type="entry name" value="Winged helix' DNA-binding domain"/>
    <property type="match status" value="1"/>
</dbReference>
<dbReference type="PROSITE" id="PS50250">
    <property type="entry name" value="PCI"/>
    <property type="match status" value="1"/>
</dbReference>
<keyword id="KW-0963">Cytoplasm</keyword>
<keyword id="KW-0539">Nucleus</keyword>
<keyword id="KW-0647">Proteasome</keyword>
<keyword id="KW-1185">Reference proteome</keyword>
<evidence type="ECO:0000250" key="1"/>
<evidence type="ECO:0000255" key="2">
    <source>
        <dbReference type="PROSITE-ProRule" id="PRU01185"/>
    </source>
</evidence>
<evidence type="ECO:0000269" key="3">
    <source>
    </source>
</evidence>
<evidence type="ECO:0000305" key="4"/>
<sequence>MDEKECVAELVDVLSQLSSNREEAMDRYERQVFTFIRNIKPETLDSLNLESELERIAAYPVILGALFMRKEFKKIDKIVNENLLSHLIGKKRVYDYFVGLIVKFLYLARKNECQDNSALFSLLVTNKELGNEYTVSVITNCLLDMLIGNKIFQRIDNSIVTTSEQARYNYYNGIIFMVEGDYESALKCFHTCVILSTNRDLVLGAEKRVILCMLLSSDYSIPYPCKPSLRIYFKLASAVKRADIKKFEETLESNKDELMSQGLYFVAKRLSQNVIQEGIRKISVVYSRISYEDIAHILGINSGEVEYLVKRTIRKGLIKGKVADGIFYSLREDKSKTDIGIGIRDCIQLANYIQEHMRYPAIEPLCYEKVRKVHDK</sequence>
<comment type="function">
    <text evidence="1">Acts as a regulatory subunit of the 26S proteasome which degrades poly-ubiquitinated proteins in the cytoplasm and in the nucleus. It is essential for the regulated turnover of proteins and for the removal of misfolded proteins. The proteasome is a multicatalytic proteinase complex that is characterized by its ability to cleave peptides with Arg, Phe, Tyr, Leu, and Glu adjacent to the leaving group at neutral or slightly basic pH (By similarity).</text>
</comment>
<comment type="subunit">
    <text evidence="1">The 26S proteasome consists of a 20S proteasome core and two 19S regulatory subunits. The 20S proteasome core is composed of 28 subunits that are arranged in four stacked rings, resulting in a barrel-shaped structure. The two end rings are each formed by seven alpha subunits, and the two central rings are each formed by seven beta subunits. The catalytic chamber with the active sites is on the inside of the barrel (By similarity).</text>
</comment>
<comment type="subcellular location">
    <subcellularLocation>
        <location evidence="1">Cytoplasm</location>
    </subcellularLocation>
    <subcellularLocation>
        <location evidence="1">Nucleus</location>
    </subcellularLocation>
</comment>
<comment type="developmental stage">
    <text evidence="3">Expressed in late sporogonial stages.</text>
</comment>
<comment type="similarity">
    <text evidence="4">Belongs to the proteasome subunit S3 family.</text>
</comment>
<gene>
    <name type="primary">RPN3</name>
    <name type="ordered locus">ECU05_1540</name>
</gene>
<proteinExistence type="evidence at protein level"/>
<accession>Q8SRT7</accession>
<reference key="1">
    <citation type="journal article" date="2001" name="Nature">
        <title>Genome sequence and gene compaction of the eukaryote parasite Encephalitozoon cuniculi.</title>
        <authorList>
            <person name="Katinka M.D."/>
            <person name="Duprat S."/>
            <person name="Cornillot E."/>
            <person name="Metenier G."/>
            <person name="Thomarat F."/>
            <person name="Prensier G."/>
            <person name="Barbe V."/>
            <person name="Peyretaillade E."/>
            <person name="Brottier P."/>
            <person name="Wincker P."/>
            <person name="Delbac F."/>
            <person name="El Alaoui H."/>
            <person name="Peyret P."/>
            <person name="Saurin W."/>
            <person name="Gouy M."/>
            <person name="Weissenbach J."/>
            <person name="Vivares C.P."/>
        </authorList>
    </citation>
    <scope>NUCLEOTIDE SEQUENCE [LARGE SCALE GENOMIC DNA]</scope>
    <source>
        <strain>GB-M1</strain>
    </source>
</reference>
<reference key="2">
    <citation type="journal article" date="2006" name="Proteomics">
        <title>Proteomic analysis of the eukaryotic parasite Encephalitozoon cuniculi (microsporidia): a reference map for proteins expressed in late sporogonial stages.</title>
        <authorList>
            <person name="Brosson D."/>
            <person name="Kuhn L."/>
            <person name="Delbac F."/>
            <person name="Garin J."/>
            <person name="Vivares C.P."/>
            <person name="Texier C."/>
        </authorList>
    </citation>
    <scope>IDENTIFICATION BY MASS SPECTROMETRY [LARGE SCALE ANALYSIS]</scope>
    <scope>DEVELOPMENTAL STAGE</scope>
</reference>
<feature type="chain" id="PRO_0000382764" description="26S proteasome regulatory subunit RPN3">
    <location>
        <begin position="1"/>
        <end position="376"/>
    </location>
</feature>
<feature type="domain" description="PCI" evidence="2">
    <location>
        <begin position="159"/>
        <end position="336"/>
    </location>
</feature>